<sequence length="328" mass="33514">MTSISSIAVLGGGAWGTALAQTAARAGRAVTLWEHDATNAQQLQSARESLYLPGVTLEPAIKVTRDLAEAARADAILLVVPAQVLRQVVTSLAPLIGAQTPLIACAKGIEHGTHKFMTEIIAEAAPNALPAILSGPSFAADVARGLPTAVTIAAADAAVAQALAQAMNCGSFRPYHSTDVRGVELGGATKNVMAIAAGIVEGRKLGASALAAMTTRGFVELVRFGTAYGARIETMHGLSGLGDLTMCCSTPQSRNFSFGMALGRGESVATAAHGKLAEGAFTAPVLLEMARAKHVEMPISEAVAAILEGQTTVDAAIGALLTRPLKAE</sequence>
<reference key="1">
    <citation type="submission" date="2006-09" db="EMBL/GenBank/DDBJ databases">
        <title>Complete sequence of Rhodopseudomonas palustris BisA53.</title>
        <authorList>
            <consortium name="US DOE Joint Genome Institute"/>
            <person name="Copeland A."/>
            <person name="Lucas S."/>
            <person name="Lapidus A."/>
            <person name="Barry K."/>
            <person name="Detter J.C."/>
            <person name="Glavina del Rio T."/>
            <person name="Hammon N."/>
            <person name="Israni S."/>
            <person name="Dalin E."/>
            <person name="Tice H."/>
            <person name="Pitluck S."/>
            <person name="Chain P."/>
            <person name="Malfatti S."/>
            <person name="Shin M."/>
            <person name="Vergez L."/>
            <person name="Schmutz J."/>
            <person name="Larimer F."/>
            <person name="Land M."/>
            <person name="Hauser L."/>
            <person name="Pelletier D.A."/>
            <person name="Kyrpides N."/>
            <person name="Kim E."/>
            <person name="Harwood C.S."/>
            <person name="Oda Y."/>
            <person name="Richardson P."/>
        </authorList>
    </citation>
    <scope>NUCLEOTIDE SEQUENCE [LARGE SCALE GENOMIC DNA]</scope>
    <source>
        <strain>BisA53</strain>
    </source>
</reference>
<proteinExistence type="inferred from homology"/>
<protein>
    <recommendedName>
        <fullName evidence="1">Glycerol-3-phosphate dehydrogenase [NAD(P)+]</fullName>
        <ecNumber evidence="1">1.1.1.94</ecNumber>
    </recommendedName>
    <alternativeName>
        <fullName evidence="1">NAD(P)(+)-dependent glycerol-3-phosphate dehydrogenase</fullName>
    </alternativeName>
    <alternativeName>
        <fullName evidence="1">NAD(P)H-dependent dihydroxyacetone-phosphate reductase</fullName>
    </alternativeName>
</protein>
<comment type="function">
    <text evidence="1">Catalyzes the reduction of the glycolytic intermediate dihydroxyacetone phosphate (DHAP) to sn-glycerol 3-phosphate (G3P), the key precursor for phospholipid synthesis.</text>
</comment>
<comment type="catalytic activity">
    <reaction evidence="1">
        <text>sn-glycerol 3-phosphate + NAD(+) = dihydroxyacetone phosphate + NADH + H(+)</text>
        <dbReference type="Rhea" id="RHEA:11092"/>
        <dbReference type="ChEBI" id="CHEBI:15378"/>
        <dbReference type="ChEBI" id="CHEBI:57540"/>
        <dbReference type="ChEBI" id="CHEBI:57597"/>
        <dbReference type="ChEBI" id="CHEBI:57642"/>
        <dbReference type="ChEBI" id="CHEBI:57945"/>
        <dbReference type="EC" id="1.1.1.94"/>
    </reaction>
    <physiologicalReaction direction="right-to-left" evidence="1">
        <dbReference type="Rhea" id="RHEA:11094"/>
    </physiologicalReaction>
</comment>
<comment type="catalytic activity">
    <reaction evidence="1">
        <text>sn-glycerol 3-phosphate + NADP(+) = dihydroxyacetone phosphate + NADPH + H(+)</text>
        <dbReference type="Rhea" id="RHEA:11096"/>
        <dbReference type="ChEBI" id="CHEBI:15378"/>
        <dbReference type="ChEBI" id="CHEBI:57597"/>
        <dbReference type="ChEBI" id="CHEBI:57642"/>
        <dbReference type="ChEBI" id="CHEBI:57783"/>
        <dbReference type="ChEBI" id="CHEBI:58349"/>
        <dbReference type="EC" id="1.1.1.94"/>
    </reaction>
    <physiologicalReaction direction="right-to-left" evidence="1">
        <dbReference type="Rhea" id="RHEA:11098"/>
    </physiologicalReaction>
</comment>
<comment type="pathway">
    <text evidence="1">Membrane lipid metabolism; glycerophospholipid metabolism.</text>
</comment>
<comment type="subcellular location">
    <subcellularLocation>
        <location evidence="1">Cytoplasm</location>
    </subcellularLocation>
</comment>
<comment type="similarity">
    <text evidence="1">Belongs to the NAD-dependent glycerol-3-phosphate dehydrogenase family.</text>
</comment>
<gene>
    <name evidence="1" type="primary">gpsA</name>
    <name type="ordered locus">RPE_0066</name>
</gene>
<dbReference type="EC" id="1.1.1.94" evidence="1"/>
<dbReference type="EMBL" id="CP000463">
    <property type="protein sequence ID" value="ABJ04027.1"/>
    <property type="molecule type" value="Genomic_DNA"/>
</dbReference>
<dbReference type="SMR" id="Q07VK7"/>
<dbReference type="STRING" id="316055.RPE_0066"/>
<dbReference type="KEGG" id="rpe:RPE_0066"/>
<dbReference type="eggNOG" id="COG0240">
    <property type="taxonomic scope" value="Bacteria"/>
</dbReference>
<dbReference type="HOGENOM" id="CLU_033449_0_2_5"/>
<dbReference type="OrthoDB" id="9812273at2"/>
<dbReference type="UniPathway" id="UPA00940"/>
<dbReference type="GO" id="GO:0005829">
    <property type="term" value="C:cytosol"/>
    <property type="evidence" value="ECO:0007669"/>
    <property type="project" value="TreeGrafter"/>
</dbReference>
<dbReference type="GO" id="GO:0047952">
    <property type="term" value="F:glycerol-3-phosphate dehydrogenase [NAD(P)+] activity"/>
    <property type="evidence" value="ECO:0007669"/>
    <property type="project" value="UniProtKB-UniRule"/>
</dbReference>
<dbReference type="GO" id="GO:0051287">
    <property type="term" value="F:NAD binding"/>
    <property type="evidence" value="ECO:0007669"/>
    <property type="project" value="InterPro"/>
</dbReference>
<dbReference type="GO" id="GO:0005975">
    <property type="term" value="P:carbohydrate metabolic process"/>
    <property type="evidence" value="ECO:0007669"/>
    <property type="project" value="InterPro"/>
</dbReference>
<dbReference type="GO" id="GO:0046167">
    <property type="term" value="P:glycerol-3-phosphate biosynthetic process"/>
    <property type="evidence" value="ECO:0007669"/>
    <property type="project" value="UniProtKB-UniRule"/>
</dbReference>
<dbReference type="GO" id="GO:0046168">
    <property type="term" value="P:glycerol-3-phosphate catabolic process"/>
    <property type="evidence" value="ECO:0007669"/>
    <property type="project" value="InterPro"/>
</dbReference>
<dbReference type="GO" id="GO:0006650">
    <property type="term" value="P:glycerophospholipid metabolic process"/>
    <property type="evidence" value="ECO:0007669"/>
    <property type="project" value="UniProtKB-UniRule"/>
</dbReference>
<dbReference type="GO" id="GO:0008654">
    <property type="term" value="P:phospholipid biosynthetic process"/>
    <property type="evidence" value="ECO:0007669"/>
    <property type="project" value="UniProtKB-KW"/>
</dbReference>
<dbReference type="FunFam" id="3.40.50.720:FF:000019">
    <property type="entry name" value="Glycerol-3-phosphate dehydrogenase [NAD(P)+]"/>
    <property type="match status" value="1"/>
</dbReference>
<dbReference type="Gene3D" id="1.10.1040.10">
    <property type="entry name" value="N-(1-d-carboxylethyl)-l-norvaline Dehydrogenase, domain 2"/>
    <property type="match status" value="1"/>
</dbReference>
<dbReference type="Gene3D" id="3.40.50.720">
    <property type="entry name" value="NAD(P)-binding Rossmann-like Domain"/>
    <property type="match status" value="1"/>
</dbReference>
<dbReference type="HAMAP" id="MF_00394">
    <property type="entry name" value="NAD_Glyc3P_dehydrog"/>
    <property type="match status" value="1"/>
</dbReference>
<dbReference type="InterPro" id="IPR008927">
    <property type="entry name" value="6-PGluconate_DH-like_C_sf"/>
</dbReference>
<dbReference type="InterPro" id="IPR013328">
    <property type="entry name" value="6PGD_dom2"/>
</dbReference>
<dbReference type="InterPro" id="IPR006168">
    <property type="entry name" value="G3P_DH_NAD-dep"/>
</dbReference>
<dbReference type="InterPro" id="IPR006109">
    <property type="entry name" value="G3P_DH_NAD-dep_C"/>
</dbReference>
<dbReference type="InterPro" id="IPR011128">
    <property type="entry name" value="G3P_DH_NAD-dep_N"/>
</dbReference>
<dbReference type="InterPro" id="IPR036291">
    <property type="entry name" value="NAD(P)-bd_dom_sf"/>
</dbReference>
<dbReference type="NCBIfam" id="NF000940">
    <property type="entry name" value="PRK00094.1-2"/>
    <property type="match status" value="1"/>
</dbReference>
<dbReference type="NCBIfam" id="NF000942">
    <property type="entry name" value="PRK00094.1-4"/>
    <property type="match status" value="1"/>
</dbReference>
<dbReference type="PANTHER" id="PTHR11728">
    <property type="entry name" value="GLYCEROL-3-PHOSPHATE DEHYDROGENASE"/>
    <property type="match status" value="1"/>
</dbReference>
<dbReference type="PANTHER" id="PTHR11728:SF1">
    <property type="entry name" value="GLYCEROL-3-PHOSPHATE DEHYDROGENASE [NAD(+)] 2, CHLOROPLASTIC"/>
    <property type="match status" value="1"/>
</dbReference>
<dbReference type="Pfam" id="PF07479">
    <property type="entry name" value="NAD_Gly3P_dh_C"/>
    <property type="match status" value="1"/>
</dbReference>
<dbReference type="Pfam" id="PF01210">
    <property type="entry name" value="NAD_Gly3P_dh_N"/>
    <property type="match status" value="1"/>
</dbReference>
<dbReference type="PIRSF" id="PIRSF000114">
    <property type="entry name" value="Glycerol-3-P_dh"/>
    <property type="match status" value="1"/>
</dbReference>
<dbReference type="PRINTS" id="PR00077">
    <property type="entry name" value="GPDHDRGNASE"/>
</dbReference>
<dbReference type="SUPFAM" id="SSF48179">
    <property type="entry name" value="6-phosphogluconate dehydrogenase C-terminal domain-like"/>
    <property type="match status" value="1"/>
</dbReference>
<dbReference type="SUPFAM" id="SSF51735">
    <property type="entry name" value="NAD(P)-binding Rossmann-fold domains"/>
    <property type="match status" value="1"/>
</dbReference>
<dbReference type="PROSITE" id="PS00957">
    <property type="entry name" value="NAD_G3PDH"/>
    <property type="match status" value="1"/>
</dbReference>
<organism>
    <name type="scientific">Rhodopseudomonas palustris (strain BisA53)</name>
    <dbReference type="NCBI Taxonomy" id="316055"/>
    <lineage>
        <taxon>Bacteria</taxon>
        <taxon>Pseudomonadati</taxon>
        <taxon>Pseudomonadota</taxon>
        <taxon>Alphaproteobacteria</taxon>
        <taxon>Hyphomicrobiales</taxon>
        <taxon>Nitrobacteraceae</taxon>
        <taxon>Rhodopseudomonas</taxon>
    </lineage>
</organism>
<accession>Q07VK7</accession>
<evidence type="ECO:0000255" key="1">
    <source>
        <dbReference type="HAMAP-Rule" id="MF_00394"/>
    </source>
</evidence>
<name>GPDA_RHOP5</name>
<keyword id="KW-0963">Cytoplasm</keyword>
<keyword id="KW-0444">Lipid biosynthesis</keyword>
<keyword id="KW-0443">Lipid metabolism</keyword>
<keyword id="KW-0520">NAD</keyword>
<keyword id="KW-0521">NADP</keyword>
<keyword id="KW-0547">Nucleotide-binding</keyword>
<keyword id="KW-0560">Oxidoreductase</keyword>
<keyword id="KW-0594">Phospholipid biosynthesis</keyword>
<keyword id="KW-1208">Phospholipid metabolism</keyword>
<feature type="chain" id="PRO_1000049541" description="Glycerol-3-phosphate dehydrogenase [NAD(P)+]">
    <location>
        <begin position="1"/>
        <end position="328"/>
    </location>
</feature>
<feature type="active site" description="Proton acceptor" evidence="1">
    <location>
        <position position="190"/>
    </location>
</feature>
<feature type="binding site" evidence="1">
    <location>
        <position position="15"/>
    </location>
    <ligand>
        <name>NADPH</name>
        <dbReference type="ChEBI" id="CHEBI:57783"/>
    </ligand>
</feature>
<feature type="binding site" evidence="1">
    <location>
        <position position="35"/>
    </location>
    <ligand>
        <name>NADPH</name>
        <dbReference type="ChEBI" id="CHEBI:57783"/>
    </ligand>
</feature>
<feature type="binding site" evidence="1">
    <location>
        <position position="51"/>
    </location>
    <ligand>
        <name>NADPH</name>
        <dbReference type="ChEBI" id="CHEBI:57783"/>
    </ligand>
</feature>
<feature type="binding site" evidence="1">
    <location>
        <position position="107"/>
    </location>
    <ligand>
        <name>NADPH</name>
        <dbReference type="ChEBI" id="CHEBI:57783"/>
    </ligand>
</feature>
<feature type="binding site" evidence="1">
    <location>
        <position position="107"/>
    </location>
    <ligand>
        <name>sn-glycerol 3-phosphate</name>
        <dbReference type="ChEBI" id="CHEBI:57597"/>
    </ligand>
</feature>
<feature type="binding site" evidence="1">
    <location>
        <position position="135"/>
    </location>
    <ligand>
        <name>sn-glycerol 3-phosphate</name>
        <dbReference type="ChEBI" id="CHEBI:57597"/>
    </ligand>
</feature>
<feature type="binding site" evidence="1">
    <location>
        <position position="137"/>
    </location>
    <ligand>
        <name>sn-glycerol 3-phosphate</name>
        <dbReference type="ChEBI" id="CHEBI:57597"/>
    </ligand>
</feature>
<feature type="binding site" evidence="1">
    <location>
        <position position="139"/>
    </location>
    <ligand>
        <name>NADPH</name>
        <dbReference type="ChEBI" id="CHEBI:57783"/>
    </ligand>
</feature>
<feature type="binding site" evidence="1">
    <location>
        <position position="190"/>
    </location>
    <ligand>
        <name>sn-glycerol 3-phosphate</name>
        <dbReference type="ChEBI" id="CHEBI:57597"/>
    </ligand>
</feature>
<feature type="binding site" evidence="1">
    <location>
        <position position="243"/>
    </location>
    <ligand>
        <name>sn-glycerol 3-phosphate</name>
        <dbReference type="ChEBI" id="CHEBI:57597"/>
    </ligand>
</feature>
<feature type="binding site" evidence="1">
    <location>
        <position position="253"/>
    </location>
    <ligand>
        <name>sn-glycerol 3-phosphate</name>
        <dbReference type="ChEBI" id="CHEBI:57597"/>
    </ligand>
</feature>
<feature type="binding site" evidence="1">
    <location>
        <position position="254"/>
    </location>
    <ligand>
        <name>NADPH</name>
        <dbReference type="ChEBI" id="CHEBI:57783"/>
    </ligand>
</feature>
<feature type="binding site" evidence="1">
    <location>
        <position position="254"/>
    </location>
    <ligand>
        <name>sn-glycerol 3-phosphate</name>
        <dbReference type="ChEBI" id="CHEBI:57597"/>
    </ligand>
</feature>
<feature type="binding site" evidence="1">
    <location>
        <position position="255"/>
    </location>
    <ligand>
        <name>sn-glycerol 3-phosphate</name>
        <dbReference type="ChEBI" id="CHEBI:57597"/>
    </ligand>
</feature>
<feature type="binding site" evidence="1">
    <location>
        <position position="276"/>
    </location>
    <ligand>
        <name>NADPH</name>
        <dbReference type="ChEBI" id="CHEBI:57783"/>
    </ligand>
</feature>
<feature type="binding site" evidence="1">
    <location>
        <position position="278"/>
    </location>
    <ligand>
        <name>NADPH</name>
        <dbReference type="ChEBI" id="CHEBI:57783"/>
    </ligand>
</feature>